<dbReference type="EC" id="2.3.1.-" evidence="1"/>
<dbReference type="EMBL" id="AC007067">
    <property type="protein sequence ID" value="AAD39570.1"/>
    <property type="molecule type" value="Genomic_DNA"/>
</dbReference>
<dbReference type="EMBL" id="CP002684">
    <property type="protein sequence ID" value="AEE28585.1"/>
    <property type="molecule type" value="Genomic_DNA"/>
</dbReference>
<dbReference type="EMBL" id="CP002684">
    <property type="protein sequence ID" value="ANM59172.1"/>
    <property type="molecule type" value="Genomic_DNA"/>
</dbReference>
<dbReference type="EMBL" id="AK226604">
    <property type="protein sequence ID" value="BAE98717.1"/>
    <property type="molecule type" value="mRNA"/>
</dbReference>
<dbReference type="RefSeq" id="NP_001318971.1">
    <property type="nucleotide sequence ID" value="NM_001331910.1"/>
</dbReference>
<dbReference type="RefSeq" id="NP_172519.1">
    <property type="nucleotide sequence ID" value="NM_100923.4"/>
</dbReference>
<dbReference type="SMR" id="Q9XIK4"/>
<dbReference type="BioGRID" id="22829">
    <property type="interactions" value="3"/>
</dbReference>
<dbReference type="FunCoup" id="Q9XIK4">
    <property type="interactions" value="4197"/>
</dbReference>
<dbReference type="STRING" id="3702.Q9XIK4"/>
<dbReference type="iPTMnet" id="Q9XIK4"/>
<dbReference type="PaxDb" id="3702-AT1G10490.1"/>
<dbReference type="ProteomicsDB" id="249082"/>
<dbReference type="EnsemblPlants" id="AT1G10490.1">
    <property type="protein sequence ID" value="AT1G10490.1"/>
    <property type="gene ID" value="AT1G10490"/>
</dbReference>
<dbReference type="EnsemblPlants" id="AT1G10490.2">
    <property type="protein sequence ID" value="AT1G10490.2"/>
    <property type="gene ID" value="AT1G10490"/>
</dbReference>
<dbReference type="GeneID" id="837589"/>
<dbReference type="Gramene" id="AT1G10490.1">
    <property type="protein sequence ID" value="AT1G10490.1"/>
    <property type="gene ID" value="AT1G10490"/>
</dbReference>
<dbReference type="Gramene" id="AT1G10490.2">
    <property type="protein sequence ID" value="AT1G10490.2"/>
    <property type="gene ID" value="AT1G10490"/>
</dbReference>
<dbReference type="KEGG" id="ath:AT1G10490"/>
<dbReference type="Araport" id="AT1G10490"/>
<dbReference type="TAIR" id="AT1G10490"/>
<dbReference type="eggNOG" id="KOG2036">
    <property type="taxonomic scope" value="Eukaryota"/>
</dbReference>
<dbReference type="HOGENOM" id="CLU_004652_0_0_1"/>
<dbReference type="InParanoid" id="Q9XIK4"/>
<dbReference type="OMA" id="HLHYIMS"/>
<dbReference type="PhylomeDB" id="Q9XIK4"/>
<dbReference type="CD-CODE" id="4299E36E">
    <property type="entry name" value="Nucleolus"/>
</dbReference>
<dbReference type="PRO" id="PR:Q9XIK4"/>
<dbReference type="Proteomes" id="UP000006548">
    <property type="component" value="Chromosome 1"/>
</dbReference>
<dbReference type="ExpressionAtlas" id="Q9XIK4">
    <property type="expression patterns" value="baseline and differential"/>
</dbReference>
<dbReference type="GO" id="GO:0005730">
    <property type="term" value="C:nucleolus"/>
    <property type="evidence" value="ECO:0007669"/>
    <property type="project" value="UniProtKB-SubCell"/>
</dbReference>
<dbReference type="GO" id="GO:1990883">
    <property type="term" value="F:18S rRNA cytidine N-acetyltransferase activity"/>
    <property type="evidence" value="ECO:0007669"/>
    <property type="project" value="RHEA"/>
</dbReference>
<dbReference type="GO" id="GO:0005524">
    <property type="term" value="F:ATP binding"/>
    <property type="evidence" value="ECO:0007669"/>
    <property type="project" value="UniProtKB-UniRule"/>
</dbReference>
<dbReference type="GO" id="GO:0051392">
    <property type="term" value="F:tRNA N4-acetyltransferase activity"/>
    <property type="evidence" value="ECO:0007669"/>
    <property type="project" value="RHEA"/>
</dbReference>
<dbReference type="GO" id="GO:1904812">
    <property type="term" value="P:rRNA acetylation involved in maturation of SSU-rRNA"/>
    <property type="evidence" value="ECO:0007669"/>
    <property type="project" value="InterPro"/>
</dbReference>
<dbReference type="GO" id="GO:0051391">
    <property type="term" value="P:tRNA acetylation"/>
    <property type="evidence" value="ECO:0007669"/>
    <property type="project" value="UniProtKB-UniRule"/>
</dbReference>
<dbReference type="FunFam" id="3.40.50.300:FF:002218">
    <property type="entry name" value="tRNA(Met) cytidine acetyltransferase TmcA"/>
    <property type="match status" value="1"/>
</dbReference>
<dbReference type="Gene3D" id="3.40.50.11040">
    <property type="match status" value="1"/>
</dbReference>
<dbReference type="Gene3D" id="3.40.630.30">
    <property type="match status" value="1"/>
</dbReference>
<dbReference type="Gene3D" id="3.40.50.300">
    <property type="entry name" value="P-loop containing nucleotide triphosphate hydrolases"/>
    <property type="match status" value="1"/>
</dbReference>
<dbReference type="HAMAP" id="MF_03211">
    <property type="entry name" value="RNA_acetyltr_Nat10"/>
    <property type="match status" value="1"/>
</dbReference>
<dbReference type="InterPro" id="IPR000182">
    <property type="entry name" value="GNAT_dom"/>
</dbReference>
<dbReference type="InterPro" id="IPR033688">
    <property type="entry name" value="NAT10"/>
</dbReference>
<dbReference type="InterPro" id="IPR007807">
    <property type="entry name" value="NAT10/TcmA_helicase"/>
</dbReference>
<dbReference type="InterPro" id="IPR027417">
    <property type="entry name" value="P-loop_NTPase"/>
</dbReference>
<dbReference type="InterPro" id="IPR032672">
    <property type="entry name" value="TmcA/NAT10/Kre33"/>
</dbReference>
<dbReference type="InterPro" id="IPR013562">
    <property type="entry name" value="TmcA_N"/>
</dbReference>
<dbReference type="InterPro" id="IPR027992">
    <property type="entry name" value="tRNA_bind_dom"/>
</dbReference>
<dbReference type="PANTHER" id="PTHR10925">
    <property type="entry name" value="N-ACETYLTRANSFERASE 10"/>
    <property type="match status" value="1"/>
</dbReference>
<dbReference type="PANTHER" id="PTHR10925:SF5">
    <property type="entry name" value="RNA CYTIDINE ACETYLTRANSFERASE"/>
    <property type="match status" value="1"/>
</dbReference>
<dbReference type="Pfam" id="PF13718">
    <property type="entry name" value="GNAT_acetyltr_2"/>
    <property type="match status" value="1"/>
</dbReference>
<dbReference type="Pfam" id="PF05127">
    <property type="entry name" value="NAT10_TcmA_helicase"/>
    <property type="match status" value="1"/>
</dbReference>
<dbReference type="Pfam" id="PF08351">
    <property type="entry name" value="TmcA_N"/>
    <property type="match status" value="1"/>
</dbReference>
<dbReference type="Pfam" id="PF13725">
    <property type="entry name" value="tRNA_bind_2"/>
    <property type="match status" value="1"/>
</dbReference>
<protein>
    <recommendedName>
        <fullName evidence="1">RNA cytidine acetyltransferase 1</fullName>
        <ecNumber evidence="1">2.3.1.-</ecNumber>
    </recommendedName>
    <alternativeName>
        <fullName evidence="1">18S rRNA cytosine acetyltransferase 1</fullName>
    </alternativeName>
</protein>
<evidence type="ECO:0000255" key="1">
    <source>
        <dbReference type="HAMAP-Rule" id="MF_03211"/>
    </source>
</evidence>
<evidence type="ECO:0000256" key="2">
    <source>
        <dbReference type="SAM" id="MobiDB-lite"/>
    </source>
</evidence>
<evidence type="ECO:0000305" key="3"/>
<name>NT101_ARATH</name>
<reference key="1">
    <citation type="journal article" date="2000" name="Nature">
        <title>Sequence and analysis of chromosome 1 of the plant Arabidopsis thaliana.</title>
        <authorList>
            <person name="Theologis A."/>
            <person name="Ecker J.R."/>
            <person name="Palm C.J."/>
            <person name="Federspiel N.A."/>
            <person name="Kaul S."/>
            <person name="White O."/>
            <person name="Alonso J."/>
            <person name="Altafi H."/>
            <person name="Araujo R."/>
            <person name="Bowman C.L."/>
            <person name="Brooks S.Y."/>
            <person name="Buehler E."/>
            <person name="Chan A."/>
            <person name="Chao Q."/>
            <person name="Chen H."/>
            <person name="Cheuk R.F."/>
            <person name="Chin C.W."/>
            <person name="Chung M.K."/>
            <person name="Conn L."/>
            <person name="Conway A.B."/>
            <person name="Conway A.R."/>
            <person name="Creasy T.H."/>
            <person name="Dewar K."/>
            <person name="Dunn P."/>
            <person name="Etgu P."/>
            <person name="Feldblyum T.V."/>
            <person name="Feng J.-D."/>
            <person name="Fong B."/>
            <person name="Fujii C.Y."/>
            <person name="Gill J.E."/>
            <person name="Goldsmith A.D."/>
            <person name="Haas B."/>
            <person name="Hansen N.F."/>
            <person name="Hughes B."/>
            <person name="Huizar L."/>
            <person name="Hunter J.L."/>
            <person name="Jenkins J."/>
            <person name="Johnson-Hopson C."/>
            <person name="Khan S."/>
            <person name="Khaykin E."/>
            <person name="Kim C.J."/>
            <person name="Koo H.L."/>
            <person name="Kremenetskaia I."/>
            <person name="Kurtz D.B."/>
            <person name="Kwan A."/>
            <person name="Lam B."/>
            <person name="Langin-Hooper S."/>
            <person name="Lee A."/>
            <person name="Lee J.M."/>
            <person name="Lenz C.A."/>
            <person name="Li J.H."/>
            <person name="Li Y.-P."/>
            <person name="Lin X."/>
            <person name="Liu S.X."/>
            <person name="Liu Z.A."/>
            <person name="Luros J.S."/>
            <person name="Maiti R."/>
            <person name="Marziali A."/>
            <person name="Militscher J."/>
            <person name="Miranda M."/>
            <person name="Nguyen M."/>
            <person name="Nierman W.C."/>
            <person name="Osborne B.I."/>
            <person name="Pai G."/>
            <person name="Peterson J."/>
            <person name="Pham P.K."/>
            <person name="Rizzo M."/>
            <person name="Rooney T."/>
            <person name="Rowley D."/>
            <person name="Sakano H."/>
            <person name="Salzberg S.L."/>
            <person name="Schwartz J.R."/>
            <person name="Shinn P."/>
            <person name="Southwick A.M."/>
            <person name="Sun H."/>
            <person name="Tallon L.J."/>
            <person name="Tambunga G."/>
            <person name="Toriumi M.J."/>
            <person name="Town C.D."/>
            <person name="Utterback T."/>
            <person name="Van Aken S."/>
            <person name="Vaysberg M."/>
            <person name="Vysotskaia V.S."/>
            <person name="Walker M."/>
            <person name="Wu D."/>
            <person name="Yu G."/>
            <person name="Fraser C.M."/>
            <person name="Venter J.C."/>
            <person name="Davis R.W."/>
        </authorList>
    </citation>
    <scope>NUCLEOTIDE SEQUENCE [LARGE SCALE GENOMIC DNA]</scope>
    <source>
        <strain>cv. Columbia</strain>
    </source>
</reference>
<reference key="2">
    <citation type="journal article" date="2017" name="Plant J.">
        <title>Araport11: a complete reannotation of the Arabidopsis thaliana reference genome.</title>
        <authorList>
            <person name="Cheng C.Y."/>
            <person name="Krishnakumar V."/>
            <person name="Chan A.P."/>
            <person name="Thibaud-Nissen F."/>
            <person name="Schobel S."/>
            <person name="Town C.D."/>
        </authorList>
    </citation>
    <scope>GENOME REANNOTATION</scope>
    <source>
        <strain>cv. Columbia</strain>
    </source>
</reference>
<reference key="3">
    <citation type="submission" date="2006-07" db="EMBL/GenBank/DDBJ databases">
        <title>Large-scale analysis of RIKEN Arabidopsis full-length (RAFL) cDNAs.</title>
        <authorList>
            <person name="Totoki Y."/>
            <person name="Seki M."/>
            <person name="Ishida J."/>
            <person name="Nakajima M."/>
            <person name="Enju A."/>
            <person name="Kamiya A."/>
            <person name="Narusaka M."/>
            <person name="Shin-i T."/>
            <person name="Nakagawa M."/>
            <person name="Sakamoto N."/>
            <person name="Oishi K."/>
            <person name="Kohara Y."/>
            <person name="Kobayashi M."/>
            <person name="Toyoda A."/>
            <person name="Sakaki Y."/>
            <person name="Sakurai T."/>
            <person name="Iida K."/>
            <person name="Akiyama K."/>
            <person name="Satou M."/>
            <person name="Toyoda T."/>
            <person name="Konagaya A."/>
            <person name="Carninci P."/>
            <person name="Kawai J."/>
            <person name="Hayashizaki Y."/>
            <person name="Shinozaki K."/>
        </authorList>
    </citation>
    <scope>NUCLEOTIDE SEQUENCE [LARGE SCALE MRNA]</scope>
    <source>
        <strain>cv. Columbia</strain>
    </source>
</reference>
<reference key="4">
    <citation type="journal article" date="2013" name="PLoS ONE">
        <title>Genome-wide comparative in silico analysis of the RNA helicase gene family in Zea mays and Glycine max: a comparison with Arabidopsis and Oryza sativa.</title>
        <authorList>
            <person name="Xu R."/>
            <person name="Zhang S."/>
            <person name="Huang J."/>
            <person name="Zheng C."/>
        </authorList>
    </citation>
    <scope>GENE FAMILY</scope>
</reference>
<keyword id="KW-0012">Acyltransferase</keyword>
<keyword id="KW-0067">ATP-binding</keyword>
<keyword id="KW-0547">Nucleotide-binding</keyword>
<keyword id="KW-0539">Nucleus</keyword>
<keyword id="KW-1185">Reference proteome</keyword>
<keyword id="KW-0698">rRNA processing</keyword>
<keyword id="KW-0808">Transferase</keyword>
<keyword id="KW-0819">tRNA processing</keyword>
<proteinExistence type="evidence at transcript level"/>
<comment type="function">
    <text evidence="1">RNA cytidine acetyltransferase with specificity toward both 18S rRNA and tRNAs. Catalyzes the formation of N(4)-acetylcytidine (ac4C) in 18S rRNA. Required for early nucleolar cleavages of precursor rRNA at sites A0, A1 and A2 during 18S rRNA synthesis. Catalyzes the formation of ac4C in serine and leucine tRNAs. Requires a tRNA-binding adapter protein for full tRNA acetyltransferase activity but not for 18S rRNA acetylation.</text>
</comment>
<comment type="catalytic activity">
    <reaction evidence="1">
        <text>a cytidine in 18S rRNA + acetyl-CoA + ATP + H2O = an N(4)-acetylcytidine in 18S rRNA + ADP + phosphate + CoA + H(+)</text>
        <dbReference type="Rhea" id="RHEA:51424"/>
        <dbReference type="Rhea" id="RHEA-COMP:13575"/>
        <dbReference type="Rhea" id="RHEA-COMP:13576"/>
        <dbReference type="ChEBI" id="CHEBI:15377"/>
        <dbReference type="ChEBI" id="CHEBI:15378"/>
        <dbReference type="ChEBI" id="CHEBI:30616"/>
        <dbReference type="ChEBI" id="CHEBI:43474"/>
        <dbReference type="ChEBI" id="CHEBI:57287"/>
        <dbReference type="ChEBI" id="CHEBI:57288"/>
        <dbReference type="ChEBI" id="CHEBI:74900"/>
        <dbReference type="ChEBI" id="CHEBI:82748"/>
        <dbReference type="ChEBI" id="CHEBI:456216"/>
    </reaction>
</comment>
<comment type="catalytic activity">
    <reaction evidence="1">
        <text>a cytidine in tRNA + acetyl-CoA + ATP + H2O = an N(4)-acetylcytidine in tRNA + ADP + phosphate + CoA + H(+)</text>
        <dbReference type="Rhea" id="RHEA:53876"/>
        <dbReference type="Rhea" id="RHEA-COMP:13670"/>
        <dbReference type="Rhea" id="RHEA-COMP:13671"/>
        <dbReference type="ChEBI" id="CHEBI:15377"/>
        <dbReference type="ChEBI" id="CHEBI:15378"/>
        <dbReference type="ChEBI" id="CHEBI:30616"/>
        <dbReference type="ChEBI" id="CHEBI:43474"/>
        <dbReference type="ChEBI" id="CHEBI:57287"/>
        <dbReference type="ChEBI" id="CHEBI:57288"/>
        <dbReference type="ChEBI" id="CHEBI:74900"/>
        <dbReference type="ChEBI" id="CHEBI:82748"/>
        <dbReference type="ChEBI" id="CHEBI:456216"/>
    </reaction>
</comment>
<comment type="subcellular location">
    <subcellularLocation>
        <location evidence="1">Nucleus</location>
        <location evidence="1">Nucleolus</location>
    </subcellularLocation>
</comment>
<comment type="similarity">
    <text evidence="1">Belongs to the RNA cytidine acetyltransferase family. NAT10 subfamily.</text>
</comment>
<sequence>MRKKVDERIRTLIENGVKLRHRSMFVIIGDKARDQIVNLHHILSKSVVKSNPSVLWCYKNRLDISSHNKKRAKQLKKMKERGQLDPEKLDAFSLFLDVVDVTHCLYKDSERILGNTFGICILQDFEALTPNLLARTIETVEGGGLVVLLLQSLASLTSLCTMVMDVHDRFRTESHSEASGRFNERFLLSLASCKACVVMDDELNLLPLSSHIKSITKVPTKEDSEALSEAERDLKSLKDALNDDFPVGPLINKCCTLDQGKAVVTFFDAILDKTLRSIVALIASRGRGKSAALGLAVAGAVAAGYSNIYVTAPSPDNLKTVFEFVCKGFDALEYKEHLEYDVVRSVNPEFNKAIVRINIFKQHRQTIQYIQPHEHEKLSQVELLVIDEAAAIPLPVVKSLLGPYLVFLSSTVSGYEGTGRSLSLKLLQQLEEQSRAPVTGVEGSLSGCLFKKIELSESIRYASGDPIESWLNGLLCLDVANCLPNPACHPLPSQCDLYYVNRDTLFSYHKDSELFLQRMMALCVSSHYKNSPNDLQLLSDAPAHHLFVLLGPVDESKNQLPDILCVIQVCLEGQISRKSAEKSLREGHSPHGDQIPWKFCEQFRDVVFPKLSGARIVRIAVHPNAMKMGYGSAAVELLTRYFEGQLASISEGDDELEVEPSPVRVTEAAAKVSLLEEQIKPRANLPPLLVPLRDRRPERLHYIGVSFGLTLDLFRFWRKHKFAPFYISQIPSAVTGEHTCMLLKPLTLSNDEFEVDESDELGFFAPFYKDFRIRFSKLLSDKFKKMDYKLAMSVLNPKINFPEVDLTGNSPDGFLKKLDGVLSPYDMERFRAYTANLVDFNLVYDICKTLAHHYFQEKLPVSLSYVQASVLLCLGLQESDFSSIERQMQLERGQIYSLLLKVGKKLYKYLNGIATKELESTLPRLKDRVLEPHKVSVDEDLREGAKEVEEQMRARIEELLDPELLDQFAIGDKEAEALQKSKISSSGLISIESTKTDNKKEKPSGFDKSAKKRGNDKHSSTSNKKRRA</sequence>
<gene>
    <name type="ordered locus">At1g10490</name>
    <name type="ORF">T10O24.10</name>
</gene>
<organism>
    <name type="scientific">Arabidopsis thaliana</name>
    <name type="common">Mouse-ear cress</name>
    <dbReference type="NCBI Taxonomy" id="3702"/>
    <lineage>
        <taxon>Eukaryota</taxon>
        <taxon>Viridiplantae</taxon>
        <taxon>Streptophyta</taxon>
        <taxon>Embryophyta</taxon>
        <taxon>Tracheophyta</taxon>
        <taxon>Spermatophyta</taxon>
        <taxon>Magnoliopsida</taxon>
        <taxon>eudicotyledons</taxon>
        <taxon>Gunneridae</taxon>
        <taxon>Pentapetalae</taxon>
        <taxon>rosids</taxon>
        <taxon>malvids</taxon>
        <taxon>Brassicales</taxon>
        <taxon>Brassicaceae</taxon>
        <taxon>Camelineae</taxon>
        <taxon>Arabidopsis</taxon>
    </lineage>
</organism>
<accession>Q9XIK4</accession>
<accession>Q0WVY1</accession>
<feature type="chain" id="PRO_0000215887" description="RNA cytidine acetyltransferase 1">
    <location>
        <begin position="1"/>
        <end position="1028"/>
    </location>
</feature>
<feature type="domain" description="N-acetyltransferase" evidence="1">
    <location>
        <begin position="548"/>
        <end position="731"/>
    </location>
</feature>
<feature type="region of interest" description="Disordered" evidence="2">
    <location>
        <begin position="989"/>
        <end position="1028"/>
    </location>
</feature>
<feature type="compositionally biased region" description="Basic and acidic residues" evidence="2">
    <location>
        <begin position="994"/>
        <end position="1009"/>
    </location>
</feature>
<feature type="binding site" evidence="1">
    <location>
        <begin position="286"/>
        <end position="295"/>
    </location>
    <ligand>
        <name>ATP</name>
        <dbReference type="ChEBI" id="CHEBI:30616"/>
    </ligand>
</feature>
<feature type="binding site" evidence="1">
    <location>
        <position position="460"/>
    </location>
    <ligand>
        <name>ATP</name>
        <dbReference type="ChEBI" id="CHEBI:30616"/>
    </ligand>
</feature>
<feature type="binding site" evidence="1">
    <location>
        <begin position="619"/>
        <end position="621"/>
    </location>
    <ligand>
        <name>acetyl-CoA</name>
        <dbReference type="ChEBI" id="CHEBI:57288"/>
    </ligand>
</feature>
<feature type="binding site" evidence="1">
    <location>
        <begin position="626"/>
        <end position="632"/>
    </location>
    <ligand>
        <name>acetyl-CoA</name>
        <dbReference type="ChEBI" id="CHEBI:57288"/>
    </ligand>
</feature>
<feature type="binding site" evidence="1">
    <location>
        <position position="719"/>
    </location>
    <ligand>
        <name>acetyl-CoA</name>
        <dbReference type="ChEBI" id="CHEBI:57288"/>
    </ligand>
</feature>
<feature type="sequence conflict" description="In Ref. 3; BAE98717." evidence="3" ref="3">
    <original>E</original>
    <variation>K</variation>
    <location>
        <position position="110"/>
    </location>
</feature>